<organism>
    <name type="scientific">Hydrogenobaculum sp. (strain Y04AAS1)</name>
    <dbReference type="NCBI Taxonomy" id="380749"/>
    <lineage>
        <taxon>Bacteria</taxon>
        <taxon>Pseudomonadati</taxon>
        <taxon>Aquificota</taxon>
        <taxon>Aquificia</taxon>
        <taxon>Aquificales</taxon>
        <taxon>Aquificaceae</taxon>
        <taxon>Hydrogenobaculum</taxon>
    </lineage>
</organism>
<evidence type="ECO:0000255" key="1">
    <source>
        <dbReference type="HAMAP-Rule" id="MF_01588"/>
    </source>
</evidence>
<gene>
    <name evidence="1" type="primary">ligA</name>
    <name type="ordered locus">HY04AAS1_0894</name>
</gene>
<accession>B4U8X0</accession>
<proteinExistence type="inferred from homology"/>
<feature type="chain" id="PRO_0000380400" description="DNA ligase">
    <location>
        <begin position="1"/>
        <end position="700"/>
    </location>
</feature>
<feature type="domain" description="BRCT" evidence="1">
    <location>
        <begin position="619"/>
        <end position="700"/>
    </location>
</feature>
<feature type="active site" description="N6-AMP-lysine intermediate" evidence="1">
    <location>
        <position position="143"/>
    </location>
</feature>
<feature type="binding site" evidence="1">
    <location>
        <begin position="61"/>
        <end position="65"/>
    </location>
    <ligand>
        <name>NAD(+)</name>
        <dbReference type="ChEBI" id="CHEBI:57540"/>
    </ligand>
</feature>
<feature type="binding site" evidence="1">
    <location>
        <begin position="110"/>
        <end position="111"/>
    </location>
    <ligand>
        <name>NAD(+)</name>
        <dbReference type="ChEBI" id="CHEBI:57540"/>
    </ligand>
</feature>
<feature type="binding site" evidence="1">
    <location>
        <position position="141"/>
    </location>
    <ligand>
        <name>NAD(+)</name>
        <dbReference type="ChEBI" id="CHEBI:57540"/>
    </ligand>
</feature>
<feature type="binding site" evidence="1">
    <location>
        <position position="164"/>
    </location>
    <ligand>
        <name>NAD(+)</name>
        <dbReference type="ChEBI" id="CHEBI:57540"/>
    </ligand>
</feature>
<feature type="binding site" evidence="1">
    <location>
        <position position="202"/>
    </location>
    <ligand>
        <name>NAD(+)</name>
        <dbReference type="ChEBI" id="CHEBI:57540"/>
    </ligand>
</feature>
<feature type="binding site" evidence="1">
    <location>
        <position position="321"/>
    </location>
    <ligand>
        <name>NAD(+)</name>
        <dbReference type="ChEBI" id="CHEBI:57540"/>
    </ligand>
</feature>
<feature type="binding site" evidence="1">
    <location>
        <position position="345"/>
    </location>
    <ligand>
        <name>NAD(+)</name>
        <dbReference type="ChEBI" id="CHEBI:57540"/>
    </ligand>
</feature>
<feature type="binding site" evidence="1">
    <location>
        <position position="439"/>
    </location>
    <ligand>
        <name>Zn(2+)</name>
        <dbReference type="ChEBI" id="CHEBI:29105"/>
    </ligand>
</feature>
<feature type="binding site" evidence="1">
    <location>
        <position position="442"/>
    </location>
    <ligand>
        <name>Zn(2+)</name>
        <dbReference type="ChEBI" id="CHEBI:29105"/>
    </ligand>
</feature>
<feature type="binding site" evidence="1">
    <location>
        <position position="457"/>
    </location>
    <ligand>
        <name>Zn(2+)</name>
        <dbReference type="ChEBI" id="CHEBI:29105"/>
    </ligand>
</feature>
<feature type="binding site" evidence="1">
    <location>
        <position position="462"/>
    </location>
    <ligand>
        <name>Zn(2+)</name>
        <dbReference type="ChEBI" id="CHEBI:29105"/>
    </ligand>
</feature>
<protein>
    <recommendedName>
        <fullName evidence="1">DNA ligase</fullName>
        <ecNumber evidence="1">6.5.1.2</ecNumber>
    </recommendedName>
    <alternativeName>
        <fullName evidence="1">Polydeoxyribonucleotide synthase [NAD(+)]</fullName>
    </alternativeName>
</protein>
<dbReference type="EC" id="6.5.1.2" evidence="1"/>
<dbReference type="EMBL" id="CP001130">
    <property type="protein sequence ID" value="ACG57581.1"/>
    <property type="molecule type" value="Genomic_DNA"/>
</dbReference>
<dbReference type="RefSeq" id="WP_012513937.1">
    <property type="nucleotide sequence ID" value="NC_011126.1"/>
</dbReference>
<dbReference type="SMR" id="B4U8X0"/>
<dbReference type="STRING" id="380749.HY04AAS1_0894"/>
<dbReference type="KEGG" id="hya:HY04AAS1_0894"/>
<dbReference type="eggNOG" id="COG0272">
    <property type="taxonomic scope" value="Bacteria"/>
</dbReference>
<dbReference type="HOGENOM" id="CLU_007764_2_1_0"/>
<dbReference type="OrthoDB" id="9759736at2"/>
<dbReference type="GO" id="GO:0005829">
    <property type="term" value="C:cytosol"/>
    <property type="evidence" value="ECO:0007669"/>
    <property type="project" value="TreeGrafter"/>
</dbReference>
<dbReference type="GO" id="GO:0003677">
    <property type="term" value="F:DNA binding"/>
    <property type="evidence" value="ECO:0007669"/>
    <property type="project" value="InterPro"/>
</dbReference>
<dbReference type="GO" id="GO:0003911">
    <property type="term" value="F:DNA ligase (NAD+) activity"/>
    <property type="evidence" value="ECO:0007669"/>
    <property type="project" value="UniProtKB-UniRule"/>
</dbReference>
<dbReference type="GO" id="GO:0046872">
    <property type="term" value="F:metal ion binding"/>
    <property type="evidence" value="ECO:0007669"/>
    <property type="project" value="UniProtKB-KW"/>
</dbReference>
<dbReference type="GO" id="GO:0006281">
    <property type="term" value="P:DNA repair"/>
    <property type="evidence" value="ECO:0007669"/>
    <property type="project" value="UniProtKB-KW"/>
</dbReference>
<dbReference type="GO" id="GO:0006260">
    <property type="term" value="P:DNA replication"/>
    <property type="evidence" value="ECO:0007669"/>
    <property type="project" value="UniProtKB-KW"/>
</dbReference>
<dbReference type="CDD" id="cd17748">
    <property type="entry name" value="BRCT_DNA_ligase_like"/>
    <property type="match status" value="1"/>
</dbReference>
<dbReference type="CDD" id="cd00114">
    <property type="entry name" value="LIGANc"/>
    <property type="match status" value="1"/>
</dbReference>
<dbReference type="FunFam" id="1.10.150.20:FF:000006">
    <property type="entry name" value="DNA ligase"/>
    <property type="match status" value="1"/>
</dbReference>
<dbReference type="FunFam" id="1.10.150.20:FF:000007">
    <property type="entry name" value="DNA ligase"/>
    <property type="match status" value="1"/>
</dbReference>
<dbReference type="FunFam" id="3.30.470.30:FF:000001">
    <property type="entry name" value="DNA ligase"/>
    <property type="match status" value="1"/>
</dbReference>
<dbReference type="Gene3D" id="6.20.10.30">
    <property type="match status" value="1"/>
</dbReference>
<dbReference type="Gene3D" id="1.10.150.20">
    <property type="entry name" value="5' to 3' exonuclease, C-terminal subdomain"/>
    <property type="match status" value="2"/>
</dbReference>
<dbReference type="Gene3D" id="3.40.50.10190">
    <property type="entry name" value="BRCT domain"/>
    <property type="match status" value="1"/>
</dbReference>
<dbReference type="Gene3D" id="3.30.470.30">
    <property type="entry name" value="DNA ligase/mRNA capping enzyme"/>
    <property type="match status" value="1"/>
</dbReference>
<dbReference type="Gene3D" id="1.10.287.610">
    <property type="entry name" value="Helix hairpin bin"/>
    <property type="match status" value="1"/>
</dbReference>
<dbReference type="Gene3D" id="2.40.50.140">
    <property type="entry name" value="Nucleic acid-binding proteins"/>
    <property type="match status" value="1"/>
</dbReference>
<dbReference type="HAMAP" id="MF_01588">
    <property type="entry name" value="DNA_ligase_A"/>
    <property type="match status" value="1"/>
</dbReference>
<dbReference type="InterPro" id="IPR001357">
    <property type="entry name" value="BRCT_dom"/>
</dbReference>
<dbReference type="InterPro" id="IPR036420">
    <property type="entry name" value="BRCT_dom_sf"/>
</dbReference>
<dbReference type="InterPro" id="IPR041663">
    <property type="entry name" value="DisA/LigA_HHH"/>
</dbReference>
<dbReference type="InterPro" id="IPR001679">
    <property type="entry name" value="DNA_ligase"/>
</dbReference>
<dbReference type="InterPro" id="IPR013839">
    <property type="entry name" value="DNAligase_adenylation"/>
</dbReference>
<dbReference type="InterPro" id="IPR013840">
    <property type="entry name" value="DNAligase_N"/>
</dbReference>
<dbReference type="InterPro" id="IPR003583">
    <property type="entry name" value="Hlx-hairpin-Hlx_DNA-bd_motif"/>
</dbReference>
<dbReference type="InterPro" id="IPR012340">
    <property type="entry name" value="NA-bd_OB-fold"/>
</dbReference>
<dbReference type="InterPro" id="IPR004150">
    <property type="entry name" value="NAD_DNA_ligase_OB"/>
</dbReference>
<dbReference type="InterPro" id="IPR010994">
    <property type="entry name" value="RuvA_2-like"/>
</dbReference>
<dbReference type="InterPro" id="IPR004149">
    <property type="entry name" value="Znf_DNAligase_C4"/>
</dbReference>
<dbReference type="NCBIfam" id="TIGR00575">
    <property type="entry name" value="dnlj"/>
    <property type="match status" value="1"/>
</dbReference>
<dbReference type="NCBIfam" id="NF005932">
    <property type="entry name" value="PRK07956.1"/>
    <property type="match status" value="1"/>
</dbReference>
<dbReference type="PANTHER" id="PTHR23389">
    <property type="entry name" value="CHROMOSOME TRANSMISSION FIDELITY FACTOR 18"/>
    <property type="match status" value="1"/>
</dbReference>
<dbReference type="PANTHER" id="PTHR23389:SF9">
    <property type="entry name" value="DNA LIGASE"/>
    <property type="match status" value="1"/>
</dbReference>
<dbReference type="Pfam" id="PF00533">
    <property type="entry name" value="BRCT"/>
    <property type="match status" value="1"/>
</dbReference>
<dbReference type="Pfam" id="PF01653">
    <property type="entry name" value="DNA_ligase_aden"/>
    <property type="match status" value="1"/>
</dbReference>
<dbReference type="Pfam" id="PF03120">
    <property type="entry name" value="DNA_ligase_OB"/>
    <property type="match status" value="1"/>
</dbReference>
<dbReference type="Pfam" id="PF03119">
    <property type="entry name" value="DNA_ligase_ZBD"/>
    <property type="match status" value="1"/>
</dbReference>
<dbReference type="Pfam" id="PF12826">
    <property type="entry name" value="HHH_2"/>
    <property type="match status" value="1"/>
</dbReference>
<dbReference type="Pfam" id="PF14520">
    <property type="entry name" value="HHH_5"/>
    <property type="match status" value="1"/>
</dbReference>
<dbReference type="Pfam" id="PF22745">
    <property type="entry name" value="Nlig-Ia"/>
    <property type="match status" value="1"/>
</dbReference>
<dbReference type="PIRSF" id="PIRSF001604">
    <property type="entry name" value="LigA"/>
    <property type="match status" value="1"/>
</dbReference>
<dbReference type="SMART" id="SM00292">
    <property type="entry name" value="BRCT"/>
    <property type="match status" value="1"/>
</dbReference>
<dbReference type="SMART" id="SM00278">
    <property type="entry name" value="HhH1"/>
    <property type="match status" value="3"/>
</dbReference>
<dbReference type="SMART" id="SM00532">
    <property type="entry name" value="LIGANc"/>
    <property type="match status" value="1"/>
</dbReference>
<dbReference type="SUPFAM" id="SSF52113">
    <property type="entry name" value="BRCT domain"/>
    <property type="match status" value="1"/>
</dbReference>
<dbReference type="SUPFAM" id="SSF56091">
    <property type="entry name" value="DNA ligase/mRNA capping enzyme, catalytic domain"/>
    <property type="match status" value="1"/>
</dbReference>
<dbReference type="SUPFAM" id="SSF50249">
    <property type="entry name" value="Nucleic acid-binding proteins"/>
    <property type="match status" value="1"/>
</dbReference>
<dbReference type="SUPFAM" id="SSF47781">
    <property type="entry name" value="RuvA domain 2-like"/>
    <property type="match status" value="1"/>
</dbReference>
<dbReference type="PROSITE" id="PS50172">
    <property type="entry name" value="BRCT"/>
    <property type="match status" value="1"/>
</dbReference>
<name>DNLJ_HYDS0</name>
<sequence>MNDKFFIDKTKEILKTYNLSPDKHPPKLSKEEAIKIINTLRELINYHDYRYYVLNQPVISDAEYDAIYKFLKSIEDNYPDLITPDSLTQRVSSDISSTFPQVKHLAPMLSLDNTYNEDDLRDFDRRVKELSGKEHIEYCVEPKYDGAGISLLYENDLFVRGATRGDGEVGEDVTKNLKTIKTIPLRANFSKQGIRLLEIRGEVIINKDDFKKINEERMAENLPPYANPRNLAAGSIRLQDPQEVVKRPLTALVYQITYVEPTNNMPKTHYGAIKMLHDLGFKTPFLDMKLCKNIQEVIDYCRYFESKRESLPYEIDGMVIKVNDISLYDELGFTSHAPRWATAFKFKAKQATTIILDVIFSVGRVGNITPVAKLEPVSLGGVTISSVSLFNEDFIREKDIHIKDTVIIERAGEVIPYVVSVVKEARPKDAKPIVFPKYCPSCGSKLVKAPGEVAWRCINISCPAQVVLRIRHFASKDAMDIKGLGEAVAQLLYDAKLVKNIADIYYLKFSDLVRLPRFAKKSAQNLIDAIEASKRRGLARVLYGLGIRYVGLTTAKKLASYYKDIWNIVKASEEDLRNIEDIGDIVARSIKEFFGLEQNINTIKRLEEAGVLLKEVSEAVSNKLAGLQFVFTGTLSCCTREVARQMVESLGATTSDSVTHHTSYLVVGQDPGATKLRKANMLGIKTISEEEFLRLLEDSK</sequence>
<reference key="1">
    <citation type="journal article" date="2009" name="J. Bacteriol.">
        <title>Complete and draft genome sequences of six members of the Aquificales.</title>
        <authorList>
            <person name="Reysenbach A.-L."/>
            <person name="Hamamura N."/>
            <person name="Podar M."/>
            <person name="Griffiths E."/>
            <person name="Ferreira S."/>
            <person name="Hochstein R."/>
            <person name="Heidelberg J."/>
            <person name="Johnson J."/>
            <person name="Mead D."/>
            <person name="Pohorille A."/>
            <person name="Sarmiento M."/>
            <person name="Schweighofer K."/>
            <person name="Seshadri R."/>
            <person name="Voytek M.A."/>
        </authorList>
    </citation>
    <scope>NUCLEOTIDE SEQUENCE [LARGE SCALE GENOMIC DNA]</scope>
    <source>
        <strain>Y04AAS1</strain>
    </source>
</reference>
<keyword id="KW-0227">DNA damage</keyword>
<keyword id="KW-0234">DNA repair</keyword>
<keyword id="KW-0235">DNA replication</keyword>
<keyword id="KW-0436">Ligase</keyword>
<keyword id="KW-0460">Magnesium</keyword>
<keyword id="KW-0464">Manganese</keyword>
<keyword id="KW-0479">Metal-binding</keyword>
<keyword id="KW-0520">NAD</keyword>
<keyword id="KW-0862">Zinc</keyword>
<comment type="function">
    <text evidence="1">DNA ligase that catalyzes the formation of phosphodiester linkages between 5'-phosphoryl and 3'-hydroxyl groups in double-stranded DNA using NAD as a coenzyme and as the energy source for the reaction. It is essential for DNA replication and repair of damaged DNA.</text>
</comment>
<comment type="catalytic activity">
    <reaction evidence="1">
        <text>NAD(+) + (deoxyribonucleotide)n-3'-hydroxyl + 5'-phospho-(deoxyribonucleotide)m = (deoxyribonucleotide)n+m + AMP + beta-nicotinamide D-nucleotide.</text>
        <dbReference type="EC" id="6.5.1.2"/>
    </reaction>
</comment>
<comment type="cofactor">
    <cofactor evidence="1">
        <name>Mg(2+)</name>
        <dbReference type="ChEBI" id="CHEBI:18420"/>
    </cofactor>
    <cofactor evidence="1">
        <name>Mn(2+)</name>
        <dbReference type="ChEBI" id="CHEBI:29035"/>
    </cofactor>
</comment>
<comment type="similarity">
    <text evidence="1">Belongs to the NAD-dependent DNA ligase family. LigA subfamily.</text>
</comment>